<gene>
    <name type="primary">PRNP</name>
    <name type="synonym">PRP</name>
</gene>
<feature type="signal peptide" evidence="1">
    <location>
        <begin position="1" status="less than"/>
        <end position="15"/>
    </location>
</feature>
<feature type="chain" id="PRO_0000025659" description="Major prion protein">
    <location>
        <begin position="16"/>
        <end position="223"/>
    </location>
</feature>
<feature type="propeptide" id="PRO_0000025660" description="Removed in mature form" evidence="1">
    <location>
        <begin position="224"/>
        <end position="246"/>
    </location>
</feature>
<feature type="repeat" description="1">
    <location>
        <begin position="44"/>
        <end position="52"/>
    </location>
</feature>
<feature type="repeat" description="2">
    <location>
        <begin position="53"/>
        <end position="60"/>
    </location>
</feature>
<feature type="repeat" description="3">
    <location>
        <begin position="61"/>
        <end position="68"/>
    </location>
</feature>
<feature type="repeat" description="4">
    <location>
        <begin position="69"/>
        <end position="76"/>
    </location>
</feature>
<feature type="repeat" description="5">
    <location>
        <begin position="77"/>
        <end position="84"/>
    </location>
</feature>
<feature type="region of interest" description="Interaction with GRB2, ERI3 and SYN1" evidence="4">
    <location>
        <begin position="16"/>
        <end position="223"/>
    </location>
</feature>
<feature type="region of interest" description="Disordered" evidence="6">
    <location>
        <begin position="18"/>
        <end position="102"/>
    </location>
</feature>
<feature type="region of interest" description="5 X 8 AA tandem repeats of P-H-G-G-G-W-G-Q">
    <location>
        <begin position="44"/>
        <end position="84"/>
    </location>
</feature>
<feature type="compositionally biased region" description="Gly residues" evidence="6">
    <location>
        <begin position="45"/>
        <end position="88"/>
    </location>
</feature>
<feature type="compositionally biased region" description="Basic residues" evidence="6">
    <location>
        <begin position="91"/>
        <end position="102"/>
    </location>
</feature>
<feature type="binding site" evidence="2">
    <location>
        <position position="54"/>
    </location>
    <ligand>
        <name>Cu(2+)</name>
        <dbReference type="ChEBI" id="CHEBI:29036"/>
        <label>1</label>
    </ligand>
</feature>
<feature type="binding site" evidence="2">
    <location>
        <position position="55"/>
    </location>
    <ligand>
        <name>Cu(2+)</name>
        <dbReference type="ChEBI" id="CHEBI:29036"/>
        <label>1</label>
    </ligand>
</feature>
<feature type="binding site" evidence="2">
    <location>
        <position position="56"/>
    </location>
    <ligand>
        <name>Cu(2+)</name>
        <dbReference type="ChEBI" id="CHEBI:29036"/>
        <label>1</label>
    </ligand>
</feature>
<feature type="binding site" evidence="2">
    <location>
        <position position="62"/>
    </location>
    <ligand>
        <name>Cu(2+)</name>
        <dbReference type="ChEBI" id="CHEBI:29036"/>
        <label>2</label>
    </ligand>
</feature>
<feature type="binding site" evidence="2">
    <location>
        <position position="63"/>
    </location>
    <ligand>
        <name>Cu(2+)</name>
        <dbReference type="ChEBI" id="CHEBI:29036"/>
        <label>2</label>
    </ligand>
</feature>
<feature type="binding site" evidence="2">
    <location>
        <position position="64"/>
    </location>
    <ligand>
        <name>Cu(2+)</name>
        <dbReference type="ChEBI" id="CHEBI:29036"/>
        <label>2</label>
    </ligand>
</feature>
<feature type="binding site" evidence="2">
    <location>
        <position position="70"/>
    </location>
    <ligand>
        <name>Cu(2+)</name>
        <dbReference type="ChEBI" id="CHEBI:29036"/>
        <label>3</label>
    </ligand>
</feature>
<feature type="binding site" evidence="2">
    <location>
        <position position="71"/>
    </location>
    <ligand>
        <name>Cu(2+)</name>
        <dbReference type="ChEBI" id="CHEBI:29036"/>
        <label>3</label>
    </ligand>
</feature>
<feature type="binding site" evidence="2">
    <location>
        <position position="72"/>
    </location>
    <ligand>
        <name>Cu(2+)</name>
        <dbReference type="ChEBI" id="CHEBI:29036"/>
        <label>3</label>
    </ligand>
</feature>
<feature type="binding site" evidence="2">
    <location>
        <position position="78"/>
    </location>
    <ligand>
        <name>Cu(2+)</name>
        <dbReference type="ChEBI" id="CHEBI:29036"/>
        <label>4</label>
    </ligand>
</feature>
<feature type="binding site" evidence="2">
    <location>
        <position position="79"/>
    </location>
    <ligand>
        <name>Cu(2+)</name>
        <dbReference type="ChEBI" id="CHEBI:29036"/>
        <label>4</label>
    </ligand>
</feature>
<feature type="binding site" evidence="2">
    <location>
        <position position="80"/>
    </location>
    <ligand>
        <name>Cu(2+)</name>
        <dbReference type="ChEBI" id="CHEBI:29036"/>
        <label>4</label>
    </ligand>
</feature>
<feature type="lipid moiety-binding region" description="GPI-anchor amidated serine" evidence="3">
    <location>
        <position position="223"/>
    </location>
</feature>
<feature type="glycosylation site" description="N-linked (GlcNAc...) asparagine" evidence="5">
    <location>
        <position position="174"/>
    </location>
</feature>
<feature type="glycosylation site" description="N-linked (GlcNAc...) asparagine" evidence="5">
    <location>
        <position position="190"/>
    </location>
</feature>
<feature type="disulfide bond" evidence="3">
    <location>
        <begin position="172"/>
        <end position="207"/>
    </location>
</feature>
<feature type="non-terminal residue">
    <location>
        <position position="1"/>
    </location>
</feature>
<dbReference type="EMBL" id="U75387">
    <property type="protein sequence ID" value="AAB50626.1"/>
    <property type="molecule type" value="Genomic_DNA"/>
</dbReference>
<dbReference type="SMR" id="P61762"/>
<dbReference type="GlyCosmos" id="P61762">
    <property type="glycosylation" value="2 sites, No reported glycans"/>
</dbReference>
<dbReference type="GO" id="GO:0005794">
    <property type="term" value="C:Golgi apparatus"/>
    <property type="evidence" value="ECO:0007669"/>
    <property type="project" value="UniProtKB-SubCell"/>
</dbReference>
<dbReference type="GO" id="GO:0005886">
    <property type="term" value="C:plasma membrane"/>
    <property type="evidence" value="ECO:0007669"/>
    <property type="project" value="UniProtKB-SubCell"/>
</dbReference>
<dbReference type="GO" id="GO:0098552">
    <property type="term" value="C:side of membrane"/>
    <property type="evidence" value="ECO:0007669"/>
    <property type="project" value="UniProtKB-KW"/>
</dbReference>
<dbReference type="GO" id="GO:0005507">
    <property type="term" value="F:copper ion binding"/>
    <property type="evidence" value="ECO:0000250"/>
    <property type="project" value="UniProtKB"/>
</dbReference>
<dbReference type="GO" id="GO:0051260">
    <property type="term" value="P:protein homooligomerization"/>
    <property type="evidence" value="ECO:0007669"/>
    <property type="project" value="InterPro"/>
</dbReference>
<dbReference type="FunFam" id="1.10.790.10:FF:000001">
    <property type="entry name" value="Major prion protein"/>
    <property type="match status" value="1"/>
</dbReference>
<dbReference type="Gene3D" id="1.10.790.10">
    <property type="entry name" value="Prion/Doppel protein, beta-ribbon domain"/>
    <property type="match status" value="1"/>
</dbReference>
<dbReference type="InterPro" id="IPR000817">
    <property type="entry name" value="Prion"/>
</dbReference>
<dbReference type="InterPro" id="IPR036924">
    <property type="entry name" value="Prion/Doppel_b-ribbon_dom_sf"/>
</dbReference>
<dbReference type="InterPro" id="IPR022416">
    <property type="entry name" value="Prion/Doppel_prot_b-ribbon_dom"/>
</dbReference>
<dbReference type="InterPro" id="IPR020949">
    <property type="entry name" value="Prion_copper_b_octapeptide"/>
</dbReference>
<dbReference type="InterPro" id="IPR025860">
    <property type="entry name" value="Prion_N"/>
</dbReference>
<dbReference type="PANTHER" id="PTHR15506">
    <property type="entry name" value="DOPPEL PRION"/>
    <property type="match status" value="1"/>
</dbReference>
<dbReference type="PANTHER" id="PTHR15506:SF2">
    <property type="entry name" value="MAJOR PRION PROTEIN"/>
    <property type="match status" value="1"/>
</dbReference>
<dbReference type="Pfam" id="PF00377">
    <property type="entry name" value="Prion"/>
    <property type="match status" value="1"/>
</dbReference>
<dbReference type="Pfam" id="PF11587">
    <property type="entry name" value="Prion_bPrPp"/>
    <property type="match status" value="1"/>
</dbReference>
<dbReference type="Pfam" id="PF03991">
    <property type="entry name" value="Prion_octapep"/>
    <property type="match status" value="1"/>
</dbReference>
<dbReference type="PRINTS" id="PR00341">
    <property type="entry name" value="PRION"/>
</dbReference>
<dbReference type="SMART" id="SM00157">
    <property type="entry name" value="PRP"/>
    <property type="match status" value="1"/>
</dbReference>
<dbReference type="SUPFAM" id="SSF54098">
    <property type="entry name" value="Prion-like"/>
    <property type="match status" value="1"/>
</dbReference>
<dbReference type="PROSITE" id="PS00291">
    <property type="entry name" value="PRION_1"/>
    <property type="match status" value="1"/>
</dbReference>
<dbReference type="PROSITE" id="PS00706">
    <property type="entry name" value="PRION_2"/>
    <property type="match status" value="1"/>
</dbReference>
<sequence>MLVLFVATWSDLGLCKKRPKPGGWNTGGSRYPGQGSPGGNRYPPQGGGGWGQPHGGGWGQPHGGGWGQPHGGGWGQPHGGGWGQGGGTHNQWHKPSKPKTSMKHMAGAAAAGAVVGGLGGYMLGSAMSRPLIHFGNDYEDRYYRENMYRYPNQVYYRPVDQYSNQNNFVHDCVNITIKQHTVTTTTKGENFTETDVKMMERVVEQMCITQYEKESQAYYQRGSSMVLFSSPPVILLISFLIFLIVG</sequence>
<proteinExistence type="inferred from homology"/>
<reference key="1">
    <citation type="submission" date="1996-11" db="EMBL/GenBank/DDBJ databases">
        <title>Evidence for an increased substitution rate of the hominoid prion protein gene during the period of brain expansion.</title>
        <authorList>
            <person name="van der Kuyl A.C."/>
            <person name="Dekker J.T."/>
            <person name="Goudsmit J."/>
        </authorList>
    </citation>
    <scope>NUCLEOTIDE SEQUENCE [GENOMIC DNA]</scope>
</reference>
<accession>P61762</accession>
<accession>Q95172</accession>
<accession>Q95173</accession>
<comment type="function">
    <text evidence="2 4">Its primary physiological function is unclear. Has cytoprotective activity against internal or environmental stresses. May play a role in neuronal development and synaptic plasticity. May be required for neuronal myelin sheath maintenance. May play a role in iron uptake and iron homeostasis. Soluble oligomers are toxic to cultured neuroblastoma cells and induce apoptosis (in vitro). Association with GPC1 (via its heparan sulfate chains) targets PRNP to lipid rafts. Also provides Cu(2+) or Zn(2+) for the ascorbate-mediated GPC1 deaminase degradation of its heparan sulfate side chains (By similarity).</text>
</comment>
<comment type="subunit">
    <text evidence="2 4">Monomer and homodimer. Has a tendency to aggregate into amyloid fibrils containing a cross-beta spine, formed by a steric zipper of superposed beta-strands. Soluble oligomers may represent an intermediate stage on the path to fibril formation. Copper binding may promote oligomerization. Interacts with GRB2, APP, ERI3/PRNPIP and SYN1. Mislocalized cytosolically exposed PrP interacts with MGRN1; this interaction alters MGRN1 subcellular location and causes lysosomal enlargement. Interacts with KIAA1191.</text>
</comment>
<comment type="subcellular location">
    <subcellularLocation>
        <location evidence="2">Cell membrane</location>
        <topology evidence="2">Lipid-anchor</topology>
        <topology evidence="2">GPI-anchor</topology>
    </subcellularLocation>
    <subcellularLocation>
        <location evidence="4">Golgi apparatus</location>
    </subcellularLocation>
    <text evidence="2">Targeted to lipid rafts via association with the heparan sulfate chains of GPC1. Colocates, in the presence of Cu(2+), to vesicles in para- and perinuclear regions, where both proteins undergo internalization. Heparin displaces PRNP from lipid rafts and promotes endocytosis.</text>
</comment>
<comment type="domain">
    <text evidence="2">The normal, monomeric form has a mainly alpha-helical structure. The disease-associated, protease-resistant form forms amyloid fibrils containing a cross-beta spine, formed by a steric zipper of superposed beta-strands. Disease mutations may favor intermolecular contacts via short beta strands, and may thereby trigger oligomerization.</text>
</comment>
<comment type="domain">
    <text evidence="2">Contains an N-terminal region composed of octamer repeats. At low copper concentrations, the sidechains of His residues from three or four repeats contribute to the binding of a single copper ion. Alternatively, a copper ion can be bound by interaction with the sidechain and backbone amide nitrogen of a single His residue. The observed copper binding stoichiometry suggests that two repeat regions cooperate to stabilize the binding of a single copper ion. At higher copper concentrations, each octamer can bind one copper ion by interactions with the His sidechain and Gly backbone atoms. A mixture of binding types may occur, especially in the case of octamer repeat expansion. Copper binding may stabilize the conformation of this region and may promote oligomerization.</text>
</comment>
<comment type="disease">
    <text evidence="7">PrP is found in high quantity in the brain of humans and animals infected with the degenerative neurological diseases kuru, Creutzfeldt-Jakob disease (CJD), Gerstmann-Straussler syndrome (GSS), scrapie, bovine spongiform encephalopathy (BSE), transmissible mink encephalopathy (TME), etc.</text>
</comment>
<comment type="similarity">
    <text evidence="7">Belongs to the prion family.</text>
</comment>
<name>PRIO_CERNE</name>
<keyword id="KW-0034">Amyloid</keyword>
<keyword id="KW-1003">Cell membrane</keyword>
<keyword id="KW-0186">Copper</keyword>
<keyword id="KW-1015">Disulfide bond</keyword>
<keyword id="KW-0325">Glycoprotein</keyword>
<keyword id="KW-0333">Golgi apparatus</keyword>
<keyword id="KW-0336">GPI-anchor</keyword>
<keyword id="KW-0449">Lipoprotein</keyword>
<keyword id="KW-0472">Membrane</keyword>
<keyword id="KW-0479">Metal-binding</keyword>
<keyword id="KW-0640">Prion</keyword>
<keyword id="KW-0677">Repeat</keyword>
<keyword id="KW-0732">Signal</keyword>
<keyword id="KW-0862">Zinc</keyword>
<organism>
    <name type="scientific">Cercopithecus neglectus</name>
    <name type="common">De Brazza's monkey</name>
    <dbReference type="NCBI Taxonomy" id="36227"/>
    <lineage>
        <taxon>Eukaryota</taxon>
        <taxon>Metazoa</taxon>
        <taxon>Chordata</taxon>
        <taxon>Craniata</taxon>
        <taxon>Vertebrata</taxon>
        <taxon>Euteleostomi</taxon>
        <taxon>Mammalia</taxon>
        <taxon>Eutheria</taxon>
        <taxon>Euarchontoglires</taxon>
        <taxon>Primates</taxon>
        <taxon>Haplorrhini</taxon>
        <taxon>Catarrhini</taxon>
        <taxon>Cercopithecidae</taxon>
        <taxon>Cercopithecinae</taxon>
        <taxon>Cercopithecus</taxon>
    </lineage>
</organism>
<evidence type="ECO:0000250" key="1"/>
<evidence type="ECO:0000250" key="2">
    <source>
        <dbReference type="UniProtKB" id="P04156"/>
    </source>
</evidence>
<evidence type="ECO:0000250" key="3">
    <source>
        <dbReference type="UniProtKB" id="P04273"/>
    </source>
</evidence>
<evidence type="ECO:0000250" key="4">
    <source>
        <dbReference type="UniProtKB" id="P04925"/>
    </source>
</evidence>
<evidence type="ECO:0000255" key="5"/>
<evidence type="ECO:0000256" key="6">
    <source>
        <dbReference type="SAM" id="MobiDB-lite"/>
    </source>
</evidence>
<evidence type="ECO:0000305" key="7"/>
<protein>
    <recommendedName>
        <fullName>Major prion protein</fullName>
        <shortName>PrP</shortName>
    </recommendedName>
    <alternativeName>
        <fullName>PrP27-30</fullName>
    </alternativeName>
    <alternativeName>
        <fullName>PrP33-35C</fullName>
    </alternativeName>
    <cdAntigenName>CD230</cdAntigenName>
</protein>